<gene>
    <name type="primary">Gjb4</name>
    <name type="synonym">Cxn-30.3</name>
</gene>
<evidence type="ECO:0000250" key="1">
    <source>
        <dbReference type="UniProtKB" id="P29033"/>
    </source>
</evidence>
<evidence type="ECO:0000250" key="2">
    <source>
        <dbReference type="UniProtKB" id="Q02738"/>
    </source>
</evidence>
<evidence type="ECO:0000269" key="3">
    <source>
    </source>
</evidence>
<evidence type="ECO:0000303" key="4">
    <source>
    </source>
</evidence>
<evidence type="ECO:0000303" key="5">
    <source>
    </source>
</evidence>
<evidence type="ECO:0000305" key="6"/>
<protein>
    <recommendedName>
        <fullName>Gap junction beta-4 protein</fullName>
    </recommendedName>
    <alternativeName>
        <fullName evidence="4 5">Connexin-30.3</fullName>
        <shortName>Cx30.3</shortName>
    </alternativeName>
</protein>
<organism>
    <name type="scientific">Rattus norvegicus</name>
    <name type="common">Rat</name>
    <dbReference type="NCBI Taxonomy" id="10116"/>
    <lineage>
        <taxon>Eukaryota</taxon>
        <taxon>Metazoa</taxon>
        <taxon>Chordata</taxon>
        <taxon>Craniata</taxon>
        <taxon>Vertebrata</taxon>
        <taxon>Euteleostomi</taxon>
        <taxon>Mammalia</taxon>
        <taxon>Eutheria</taxon>
        <taxon>Euarchontoglires</taxon>
        <taxon>Glires</taxon>
        <taxon>Rodentia</taxon>
        <taxon>Myomorpha</taxon>
        <taxon>Muroidea</taxon>
        <taxon>Muridae</taxon>
        <taxon>Murinae</taxon>
        <taxon>Rattus</taxon>
    </lineage>
</organism>
<keyword id="KW-0965">Cell junction</keyword>
<keyword id="KW-1003">Cell membrane</keyword>
<keyword id="KW-1015">Disulfide bond</keyword>
<keyword id="KW-0303">Gap junction</keyword>
<keyword id="KW-0472">Membrane</keyword>
<keyword id="KW-1185">Reference proteome</keyword>
<keyword id="KW-0812">Transmembrane</keyword>
<keyword id="KW-1133">Transmembrane helix</keyword>
<feature type="chain" id="PRO_0000057867" description="Gap junction beta-4 protein">
    <location>
        <begin position="1"/>
        <end position="265"/>
    </location>
</feature>
<feature type="intramembrane region" evidence="1">
    <location>
        <begin position="2"/>
        <end position="13"/>
    </location>
</feature>
<feature type="topological domain" description="Cytoplasmic" evidence="6">
    <location>
        <begin position="14"/>
        <end position="20"/>
    </location>
</feature>
<feature type="transmembrane region" description="Helical" evidence="1">
    <location>
        <begin position="21"/>
        <end position="40"/>
    </location>
</feature>
<feature type="topological domain" description="Extracellular" evidence="6">
    <location>
        <begin position="41"/>
        <end position="73"/>
    </location>
</feature>
<feature type="transmembrane region" description="Helical" evidence="1">
    <location>
        <begin position="74"/>
        <end position="94"/>
    </location>
</feature>
<feature type="topological domain" description="Cytoplasmic" evidence="6">
    <location>
        <begin position="95"/>
        <end position="130"/>
    </location>
</feature>
<feature type="transmembrane region" description="Helical" evidence="1">
    <location>
        <begin position="131"/>
        <end position="151"/>
    </location>
</feature>
<feature type="topological domain" description="Extracellular" evidence="6">
    <location>
        <begin position="152"/>
        <end position="184"/>
    </location>
</feature>
<feature type="transmembrane region" description="Helical" evidence="1">
    <location>
        <begin position="185"/>
        <end position="205"/>
    </location>
</feature>
<feature type="topological domain" description="Cytoplasmic" evidence="6">
    <location>
        <begin position="206"/>
        <end position="265"/>
    </location>
</feature>
<feature type="disulfide bond" evidence="1">
    <location>
        <begin position="53"/>
        <end position="175"/>
    </location>
</feature>
<feature type="disulfide bond" evidence="1">
    <location>
        <begin position="60"/>
        <end position="169"/>
    </location>
</feature>
<feature type="disulfide bond" evidence="1">
    <location>
        <begin position="64"/>
        <end position="164"/>
    </location>
</feature>
<comment type="function">
    <text evidence="1 2">Structural component of gap junctions (By similarity). Gap junctions are dodecameric channels that connect the cytoplasm of adjoining cells. They are formed by the docking of two hexameric hemichannels, one from each cell membrane (By similarity). Small molecules and ions diffuse from one cell to a neighboring cell via the central pore (By similarity).</text>
</comment>
<comment type="subunit">
    <text evidence="1 2">A hemichannel or connexon is composed of a hexamer of connexins. A functional gap junction is formed by the apposition of two hemichannels (By similarity). Forms heteromeric channels with GJB2 (By similarity).</text>
</comment>
<comment type="subcellular location">
    <subcellularLocation>
        <location evidence="2">Cell membrane</location>
        <topology evidence="2">Multi-pass membrane protein</topology>
    </subcellularLocation>
    <subcellularLocation>
        <location evidence="2">Cell junction</location>
        <location evidence="2">Gap junction</location>
    </subcellularLocation>
    <text evidence="2">Colocalizes with GJB2 at gap junction plaques in the cochlea.</text>
</comment>
<comment type="tissue specificity">
    <text evidence="3">Detected in adult heart, kidney, skin and cochlea, where it is detected in spiral ganglion, stria vascularis, spiral limbus and spiral ligament (at protein level).</text>
</comment>
<comment type="similarity">
    <text evidence="6">Belongs to the connexin family. Beta-type (group I) subfamily.</text>
</comment>
<proteinExistence type="evidence at protein level"/>
<reference key="1">
    <citation type="journal article" date="1994" name="Exp. Cell Res.">
        <title>Rat connexins 30.3 and 31 are expressed in the kidney.</title>
        <authorList>
            <person name="Tucker M.A."/>
            <person name="Barajas L."/>
        </authorList>
    </citation>
    <scope>NUCLEOTIDE SEQUENCE [MRNA]</scope>
    <source>
        <strain>Sprague-Dawley</strain>
    </source>
</reference>
<reference key="2">
    <citation type="journal article" date="2010" name="Hear. Res.">
        <title>Novel expression patterns of connexin 30.3 in adult rat cochlea.</title>
        <authorList>
            <person name="Wang W.H."/>
            <person name="Yang J.J."/>
            <person name="Lin Y.C."/>
            <person name="Yang J.T."/>
            <person name="Li S.Y."/>
        </authorList>
    </citation>
    <scope>TISSUE SPECIFICITY</scope>
</reference>
<dbReference type="EMBL" id="X76168">
    <property type="protein sequence ID" value="CAA53762.1"/>
    <property type="molecule type" value="mRNA"/>
</dbReference>
<dbReference type="PIR" id="I60240">
    <property type="entry name" value="S38891"/>
</dbReference>
<dbReference type="RefSeq" id="NP_446436.1">
    <property type="nucleotide sequence ID" value="NM_053984.2"/>
</dbReference>
<dbReference type="SMR" id="P36380"/>
<dbReference type="FunCoup" id="P36380">
    <property type="interactions" value="6"/>
</dbReference>
<dbReference type="STRING" id="10116.ENSRNOP00000033893"/>
<dbReference type="PhosphoSitePlus" id="P36380"/>
<dbReference type="PaxDb" id="10116-ENSRNOP00000033893"/>
<dbReference type="UCSC" id="RGD:621829">
    <property type="organism name" value="rat"/>
</dbReference>
<dbReference type="AGR" id="RGD:621829"/>
<dbReference type="RGD" id="621829">
    <property type="gene designation" value="Gjb4"/>
</dbReference>
<dbReference type="eggNOG" id="ENOG502R3YE">
    <property type="taxonomic scope" value="Eukaryota"/>
</dbReference>
<dbReference type="InParanoid" id="P36380"/>
<dbReference type="OrthoDB" id="9441654at2759"/>
<dbReference type="PhylomeDB" id="P36380"/>
<dbReference type="Reactome" id="R-RNO-190861">
    <property type="pathway name" value="Gap junction assembly"/>
</dbReference>
<dbReference type="PRO" id="PR:P36380"/>
<dbReference type="Proteomes" id="UP000002494">
    <property type="component" value="Unplaced"/>
</dbReference>
<dbReference type="GO" id="GO:0005922">
    <property type="term" value="C:connexin complex"/>
    <property type="evidence" value="ECO:0000250"/>
    <property type="project" value="UniProtKB"/>
</dbReference>
<dbReference type="GO" id="GO:0005886">
    <property type="term" value="C:plasma membrane"/>
    <property type="evidence" value="ECO:0000250"/>
    <property type="project" value="UniProtKB"/>
</dbReference>
<dbReference type="GO" id="GO:0005243">
    <property type="term" value="F:gap junction channel activity"/>
    <property type="evidence" value="ECO:0000250"/>
    <property type="project" value="UniProtKB"/>
</dbReference>
<dbReference type="GO" id="GO:0007267">
    <property type="term" value="P:cell-cell signaling"/>
    <property type="evidence" value="ECO:0000250"/>
    <property type="project" value="UniProtKB"/>
</dbReference>
<dbReference type="GO" id="GO:1990349">
    <property type="term" value="P:gap junction-mediated intercellular transport"/>
    <property type="evidence" value="ECO:0000250"/>
    <property type="project" value="UniProtKB"/>
</dbReference>
<dbReference type="GO" id="GO:0042048">
    <property type="term" value="P:olfactory behavior"/>
    <property type="evidence" value="ECO:0000266"/>
    <property type="project" value="RGD"/>
</dbReference>
<dbReference type="GO" id="GO:0007608">
    <property type="term" value="P:sensory perception of smell"/>
    <property type="evidence" value="ECO:0000266"/>
    <property type="project" value="RGD"/>
</dbReference>
<dbReference type="FunFam" id="1.20.1440.80:FF:000001">
    <property type="entry name" value="Gap junction alpha-1"/>
    <property type="match status" value="1"/>
</dbReference>
<dbReference type="Gene3D" id="1.20.1440.80">
    <property type="entry name" value="Gap junction channel protein cysteine-rich domain"/>
    <property type="match status" value="1"/>
</dbReference>
<dbReference type="InterPro" id="IPR000500">
    <property type="entry name" value="Connexin"/>
</dbReference>
<dbReference type="InterPro" id="IPR002270">
    <property type="entry name" value="Connexin-30.3"/>
</dbReference>
<dbReference type="InterPro" id="IPR019570">
    <property type="entry name" value="Connexin_CCC"/>
</dbReference>
<dbReference type="InterPro" id="IPR017990">
    <property type="entry name" value="Connexin_CS"/>
</dbReference>
<dbReference type="InterPro" id="IPR013092">
    <property type="entry name" value="Connexin_N"/>
</dbReference>
<dbReference type="InterPro" id="IPR038359">
    <property type="entry name" value="Connexin_N_sf"/>
</dbReference>
<dbReference type="PANTHER" id="PTHR11984">
    <property type="entry name" value="CONNEXIN"/>
    <property type="match status" value="1"/>
</dbReference>
<dbReference type="PANTHER" id="PTHR11984:SF30">
    <property type="entry name" value="GAP JUNCTION BETA-4 PROTEIN"/>
    <property type="match status" value="1"/>
</dbReference>
<dbReference type="Pfam" id="PF00029">
    <property type="entry name" value="Connexin"/>
    <property type="match status" value="1"/>
</dbReference>
<dbReference type="PRINTS" id="PR00206">
    <property type="entry name" value="CONNEXIN"/>
</dbReference>
<dbReference type="PRINTS" id="PR01142">
    <property type="entry name" value="CONNEXINB5"/>
</dbReference>
<dbReference type="SMART" id="SM00037">
    <property type="entry name" value="CNX"/>
    <property type="match status" value="1"/>
</dbReference>
<dbReference type="SMART" id="SM01089">
    <property type="entry name" value="Connexin_CCC"/>
    <property type="match status" value="1"/>
</dbReference>
<dbReference type="PROSITE" id="PS00407">
    <property type="entry name" value="CONNEXINS_1"/>
    <property type="match status" value="1"/>
</dbReference>
<dbReference type="PROSITE" id="PS00408">
    <property type="entry name" value="CONNEXINS_2"/>
    <property type="match status" value="1"/>
</dbReference>
<sequence>MNWGFLQGILSGVNKYSTALGRIWLSVVFIFRVLVYVVAAEEVWDDEQKDFICNTKQPGCPNVCYDEFFPVSHVRLWALQLILVTCPSLLVVMHVAYREERERKHRLKHGPDAPALYSNLSKKRGGLWWTYLLSLIFKAAVDSGFLYIFHCIYKDYDMPRVVACSVQPCPHTVDCYISRPTEKKVFTYFMVVTAAICILLNLSEVAYLVGKRCMEVFRPRRQKTSRRHQLPDTCPPYVISKGHPQDESTVLTKAGMATVDAGVYP</sequence>
<accession>P36380</accession>
<name>CXB4_RAT</name>